<proteinExistence type="inferred from homology"/>
<name>DARP_SALCH</name>
<gene>
    <name evidence="1" type="primary">darP</name>
    <name type="ordered locus">SCH_4291</name>
</gene>
<organism>
    <name type="scientific">Salmonella choleraesuis (strain SC-B67)</name>
    <dbReference type="NCBI Taxonomy" id="321314"/>
    <lineage>
        <taxon>Bacteria</taxon>
        <taxon>Pseudomonadati</taxon>
        <taxon>Pseudomonadota</taxon>
        <taxon>Gammaproteobacteria</taxon>
        <taxon>Enterobacterales</taxon>
        <taxon>Enterobacteriaceae</taxon>
        <taxon>Salmonella</taxon>
    </lineage>
</organism>
<keyword id="KW-0963">Cytoplasm</keyword>
<keyword id="KW-0690">Ribosome biogenesis</keyword>
<keyword id="KW-0694">RNA-binding</keyword>
<keyword id="KW-0699">rRNA-binding</keyword>
<comment type="function">
    <text evidence="1">Member of a network of 50S ribosomal subunit biogenesis factors which assembles along the 30S-50S interface, preventing incorrect 23S rRNA structures from forming. Promotes peptidyl transferase center (PTC) maturation.</text>
</comment>
<comment type="subcellular location">
    <subcellularLocation>
        <location evidence="1">Cytoplasm</location>
    </subcellularLocation>
    <text evidence="1">Associates with late stage pre-50S ribosomal subunits.</text>
</comment>
<comment type="similarity">
    <text evidence="1">Belongs to the DarP family.</text>
</comment>
<reference key="1">
    <citation type="journal article" date="2005" name="Nucleic Acids Res.">
        <title>The genome sequence of Salmonella enterica serovar Choleraesuis, a highly invasive and resistant zoonotic pathogen.</title>
        <authorList>
            <person name="Chiu C.-H."/>
            <person name="Tang P."/>
            <person name="Chu C."/>
            <person name="Hu S."/>
            <person name="Bao Q."/>
            <person name="Yu J."/>
            <person name="Chou Y.-Y."/>
            <person name="Wang H.-S."/>
            <person name="Lee Y.-S."/>
        </authorList>
    </citation>
    <scope>NUCLEOTIDE SEQUENCE [LARGE SCALE GENOMIC DNA]</scope>
    <source>
        <strain>SC-B67</strain>
    </source>
</reference>
<feature type="chain" id="PRO_0000257638" description="Dual-action ribosomal maturation protein DarP">
    <location>
        <begin position="1"/>
        <end position="183"/>
    </location>
</feature>
<evidence type="ECO:0000255" key="1">
    <source>
        <dbReference type="HAMAP-Rule" id="MF_00765"/>
    </source>
</evidence>
<sequence>MTKQPEDWLDDVPGDDIEDEDDEIIWVSKSEIKRDAEELKRLGAELVDLGKNALDKIPLDADLRDAIELAQRIKMEGRRRQLQLIGKMLRQRDVEPIRQALDKLKNRHNQQVVLFHKLEHLRDRLIVEGDDAVAEVLTLWPHADRQQLRSLIRNAKKEKEGNKPPKSARQIFQYLRELAENEG</sequence>
<dbReference type="EMBL" id="AE017220">
    <property type="protein sequence ID" value="AAX68197.1"/>
    <property type="molecule type" value="Genomic_DNA"/>
</dbReference>
<dbReference type="SMR" id="Q57GG5"/>
<dbReference type="KEGG" id="sec:SCH_4291"/>
<dbReference type="HOGENOM" id="CLU_106757_2_0_6"/>
<dbReference type="Proteomes" id="UP000000538">
    <property type="component" value="Chromosome"/>
</dbReference>
<dbReference type="GO" id="GO:0005829">
    <property type="term" value="C:cytosol"/>
    <property type="evidence" value="ECO:0007669"/>
    <property type="project" value="TreeGrafter"/>
</dbReference>
<dbReference type="GO" id="GO:0043022">
    <property type="term" value="F:ribosome binding"/>
    <property type="evidence" value="ECO:0007669"/>
    <property type="project" value="UniProtKB-UniRule"/>
</dbReference>
<dbReference type="GO" id="GO:0019843">
    <property type="term" value="F:rRNA binding"/>
    <property type="evidence" value="ECO:0007669"/>
    <property type="project" value="UniProtKB-UniRule"/>
</dbReference>
<dbReference type="GO" id="GO:1902626">
    <property type="term" value="P:assembly of large subunit precursor of preribosome"/>
    <property type="evidence" value="ECO:0007669"/>
    <property type="project" value="UniProtKB-UniRule"/>
</dbReference>
<dbReference type="CDD" id="cd16331">
    <property type="entry name" value="YjgA-like"/>
    <property type="match status" value="1"/>
</dbReference>
<dbReference type="FunFam" id="1.10.60.30:FF:000001">
    <property type="entry name" value="UPF0307 protein YjgA"/>
    <property type="match status" value="1"/>
</dbReference>
<dbReference type="FunFam" id="1.10.60.30:FF:000002">
    <property type="entry name" value="UPF0307 protein YjgA"/>
    <property type="match status" value="1"/>
</dbReference>
<dbReference type="Gene3D" id="1.10.60.30">
    <property type="entry name" value="PSPTO4464-like domains"/>
    <property type="match status" value="2"/>
</dbReference>
<dbReference type="HAMAP" id="MF_00765">
    <property type="entry name" value="DarP"/>
    <property type="match status" value="1"/>
</dbReference>
<dbReference type="InterPro" id="IPR006839">
    <property type="entry name" value="DarP"/>
</dbReference>
<dbReference type="InterPro" id="IPR023153">
    <property type="entry name" value="DarP_sf"/>
</dbReference>
<dbReference type="NCBIfam" id="NF003593">
    <property type="entry name" value="PRK05255.1-1"/>
    <property type="match status" value="1"/>
</dbReference>
<dbReference type="PANTHER" id="PTHR38101">
    <property type="entry name" value="UPF0307 PROTEIN YJGA"/>
    <property type="match status" value="1"/>
</dbReference>
<dbReference type="PANTHER" id="PTHR38101:SF1">
    <property type="entry name" value="UPF0307 PROTEIN YJGA"/>
    <property type="match status" value="1"/>
</dbReference>
<dbReference type="Pfam" id="PF04751">
    <property type="entry name" value="DarP"/>
    <property type="match status" value="1"/>
</dbReference>
<dbReference type="PIRSF" id="PIRSF016183">
    <property type="entry name" value="UCP016183"/>
    <property type="match status" value="1"/>
</dbReference>
<dbReference type="SUPFAM" id="SSF158710">
    <property type="entry name" value="PSPTO4464-like"/>
    <property type="match status" value="1"/>
</dbReference>
<protein>
    <recommendedName>
        <fullName evidence="1">Dual-action ribosomal maturation protein DarP</fullName>
    </recommendedName>
    <alternativeName>
        <fullName evidence="1">Large ribosomal subunit assembly factor DarP</fullName>
    </alternativeName>
</protein>
<accession>Q57GG5</accession>